<reference key="1">
    <citation type="journal article" date="2002" name="Nature">
        <title>Complete genome sequence of the model actinomycete Streptomyces coelicolor A3(2).</title>
        <authorList>
            <person name="Bentley S.D."/>
            <person name="Chater K.F."/>
            <person name="Cerdeno-Tarraga A.-M."/>
            <person name="Challis G.L."/>
            <person name="Thomson N.R."/>
            <person name="James K.D."/>
            <person name="Harris D.E."/>
            <person name="Quail M.A."/>
            <person name="Kieser H."/>
            <person name="Harper D."/>
            <person name="Bateman A."/>
            <person name="Brown S."/>
            <person name="Chandra G."/>
            <person name="Chen C.W."/>
            <person name="Collins M."/>
            <person name="Cronin A."/>
            <person name="Fraser A."/>
            <person name="Goble A."/>
            <person name="Hidalgo J."/>
            <person name="Hornsby T."/>
            <person name="Howarth S."/>
            <person name="Huang C.-H."/>
            <person name="Kieser T."/>
            <person name="Larke L."/>
            <person name="Murphy L.D."/>
            <person name="Oliver K."/>
            <person name="O'Neil S."/>
            <person name="Rabbinowitsch E."/>
            <person name="Rajandream M.A."/>
            <person name="Rutherford K.M."/>
            <person name="Rutter S."/>
            <person name="Seeger K."/>
            <person name="Saunders D."/>
            <person name="Sharp S."/>
            <person name="Squares R."/>
            <person name="Squares S."/>
            <person name="Taylor K."/>
            <person name="Warren T."/>
            <person name="Wietzorrek A."/>
            <person name="Woodward J.R."/>
            <person name="Barrell B.G."/>
            <person name="Parkhill J."/>
            <person name="Hopwood D.A."/>
        </authorList>
    </citation>
    <scope>NUCLEOTIDE SEQUENCE [LARGE SCALE GENOMIC DNA]</scope>
    <source>
        <strain>ATCC BAA-471 / A3(2) / M145</strain>
    </source>
</reference>
<name>PTA_STRCO</name>
<protein>
    <recommendedName>
        <fullName>Phosphate acetyltransferase</fullName>
        <ecNumber>2.3.1.8</ecNumber>
    </recommendedName>
    <alternativeName>
        <fullName>Phosphotransacetylase</fullName>
    </alternativeName>
</protein>
<accession>Q8CJR5</accession>
<organism>
    <name type="scientific">Streptomyces coelicolor (strain ATCC BAA-471 / A3(2) / M145)</name>
    <dbReference type="NCBI Taxonomy" id="100226"/>
    <lineage>
        <taxon>Bacteria</taxon>
        <taxon>Bacillati</taxon>
        <taxon>Actinomycetota</taxon>
        <taxon>Actinomycetes</taxon>
        <taxon>Kitasatosporales</taxon>
        <taxon>Streptomycetaceae</taxon>
        <taxon>Streptomyces</taxon>
        <taxon>Streptomyces albidoflavus group</taxon>
    </lineage>
</organism>
<comment type="function">
    <text evidence="1">Involved in acetate metabolism.</text>
</comment>
<comment type="catalytic activity">
    <reaction>
        <text>acetyl-CoA + phosphate = acetyl phosphate + CoA</text>
        <dbReference type="Rhea" id="RHEA:19521"/>
        <dbReference type="ChEBI" id="CHEBI:22191"/>
        <dbReference type="ChEBI" id="CHEBI:43474"/>
        <dbReference type="ChEBI" id="CHEBI:57287"/>
        <dbReference type="ChEBI" id="CHEBI:57288"/>
        <dbReference type="EC" id="2.3.1.8"/>
    </reaction>
</comment>
<comment type="pathway">
    <text>Metabolic intermediate biosynthesis; acetyl-CoA biosynthesis; acetyl-CoA from acetate: step 2/2.</text>
</comment>
<comment type="subunit">
    <text evidence="1">Homohexamer.</text>
</comment>
<comment type="subcellular location">
    <subcellularLocation>
        <location evidence="2">Cytoplasm</location>
    </subcellularLocation>
</comment>
<comment type="domain">
    <text evidence="1">The N-terminal region seems to be important for proper quaternary structure. The C-terminal region contains the substrate-binding site (By similarity).</text>
</comment>
<comment type="similarity">
    <text evidence="2">In the N-terminal section; belongs to the CobB/CobQ family.</text>
</comment>
<comment type="similarity">
    <text evidence="2">In the C-terminal section; belongs to the phosphate acetyltransferase and butyryltransferase family.</text>
</comment>
<evidence type="ECO:0000250" key="1"/>
<evidence type="ECO:0000305" key="2"/>
<keyword id="KW-0012">Acyltransferase</keyword>
<keyword id="KW-0963">Cytoplasm</keyword>
<keyword id="KW-1185">Reference proteome</keyword>
<keyword id="KW-0808">Transferase</keyword>
<proteinExistence type="inferred from homology"/>
<feature type="chain" id="PRO_0000405553" description="Phosphate acetyltransferase">
    <location>
        <begin position="1"/>
        <end position="697"/>
    </location>
</feature>
<feature type="region of interest" description="Phosphate acetyltransferase">
    <location>
        <begin position="366"/>
        <end position="697"/>
    </location>
</feature>
<dbReference type="EC" id="2.3.1.8"/>
<dbReference type="EMBL" id="AL939123">
    <property type="protein sequence ID" value="CAD55352.1"/>
    <property type="molecule type" value="Genomic_DNA"/>
</dbReference>
<dbReference type="RefSeq" id="NP_733663.1">
    <property type="nucleotide sequence ID" value="NC_003888.3"/>
</dbReference>
<dbReference type="RefSeq" id="WP_011030239.1">
    <property type="nucleotide sequence ID" value="NZ_VNID01000011.1"/>
</dbReference>
<dbReference type="SMR" id="Q8CJR5"/>
<dbReference type="FunCoup" id="Q8CJR5">
    <property type="interactions" value="113"/>
</dbReference>
<dbReference type="STRING" id="100226.gene:17763077"/>
<dbReference type="PaxDb" id="100226-SCO5425"/>
<dbReference type="GeneID" id="91383609"/>
<dbReference type="KEGG" id="sco:SCO5425"/>
<dbReference type="PATRIC" id="fig|100226.15.peg.5506"/>
<dbReference type="eggNOG" id="COG0280">
    <property type="taxonomic scope" value="Bacteria"/>
</dbReference>
<dbReference type="eggNOG" id="COG0857">
    <property type="taxonomic scope" value="Bacteria"/>
</dbReference>
<dbReference type="HOGENOM" id="CLU_019723_3_0_11"/>
<dbReference type="InParanoid" id="Q8CJR5"/>
<dbReference type="OrthoDB" id="9808984at2"/>
<dbReference type="PhylomeDB" id="Q8CJR5"/>
<dbReference type="UniPathway" id="UPA00340">
    <property type="reaction ID" value="UER00459"/>
</dbReference>
<dbReference type="Proteomes" id="UP000001973">
    <property type="component" value="Chromosome"/>
</dbReference>
<dbReference type="GO" id="GO:0005737">
    <property type="term" value="C:cytoplasm"/>
    <property type="evidence" value="ECO:0007669"/>
    <property type="project" value="UniProtKB-SubCell"/>
</dbReference>
<dbReference type="GO" id="GO:0008959">
    <property type="term" value="F:phosphate acetyltransferase activity"/>
    <property type="evidence" value="ECO:0007669"/>
    <property type="project" value="UniProtKB-EC"/>
</dbReference>
<dbReference type="GO" id="GO:0006085">
    <property type="term" value="P:acetyl-CoA biosynthetic process"/>
    <property type="evidence" value="ECO:0007669"/>
    <property type="project" value="UniProtKB-UniPathway"/>
</dbReference>
<dbReference type="CDD" id="cd03109">
    <property type="entry name" value="DTBS"/>
    <property type="match status" value="1"/>
</dbReference>
<dbReference type="FunFam" id="3.40.50.10750:FF:000001">
    <property type="entry name" value="Phosphate acetyltransferase"/>
    <property type="match status" value="1"/>
</dbReference>
<dbReference type="Gene3D" id="3.40.50.10950">
    <property type="match status" value="1"/>
</dbReference>
<dbReference type="Gene3D" id="3.40.1390.20">
    <property type="entry name" value="HprK N-terminal domain-like"/>
    <property type="match status" value="1"/>
</dbReference>
<dbReference type="Gene3D" id="3.40.50.10750">
    <property type="entry name" value="Isocitrate/Isopropylmalate dehydrogenase-like"/>
    <property type="match status" value="1"/>
</dbReference>
<dbReference type="Gene3D" id="3.40.50.300">
    <property type="entry name" value="P-loop containing nucleotide triphosphate hydrolases"/>
    <property type="match status" value="1"/>
</dbReference>
<dbReference type="InterPro" id="IPR010766">
    <property type="entry name" value="DRTGG"/>
</dbReference>
<dbReference type="InterPro" id="IPR016475">
    <property type="entry name" value="P-Actrans_bac"/>
</dbReference>
<dbReference type="InterPro" id="IPR027417">
    <property type="entry name" value="P-loop_NTPase"/>
</dbReference>
<dbReference type="InterPro" id="IPR004614">
    <property type="entry name" value="P_AcTrfase"/>
</dbReference>
<dbReference type="InterPro" id="IPR042113">
    <property type="entry name" value="P_AcTrfase_dom1"/>
</dbReference>
<dbReference type="InterPro" id="IPR042112">
    <property type="entry name" value="P_AcTrfase_dom2"/>
</dbReference>
<dbReference type="InterPro" id="IPR050500">
    <property type="entry name" value="Phos_Acetyltrans/Butyryltrans"/>
</dbReference>
<dbReference type="InterPro" id="IPR002505">
    <property type="entry name" value="PTA_PTB"/>
</dbReference>
<dbReference type="InterPro" id="IPR028979">
    <property type="entry name" value="Ser_kin/Pase_Hpr-like_N_sf"/>
</dbReference>
<dbReference type="NCBIfam" id="NF004167">
    <property type="entry name" value="PRK05632.1"/>
    <property type="match status" value="1"/>
</dbReference>
<dbReference type="NCBIfam" id="NF007233">
    <property type="entry name" value="PRK09653.1"/>
    <property type="match status" value="1"/>
</dbReference>
<dbReference type="NCBIfam" id="TIGR00651">
    <property type="entry name" value="pta"/>
    <property type="match status" value="1"/>
</dbReference>
<dbReference type="PANTHER" id="PTHR43356">
    <property type="entry name" value="PHOSPHATE ACETYLTRANSFERASE"/>
    <property type="match status" value="1"/>
</dbReference>
<dbReference type="PANTHER" id="PTHR43356:SF3">
    <property type="entry name" value="PHOSPHATE ACETYLTRANSFERASE"/>
    <property type="match status" value="1"/>
</dbReference>
<dbReference type="Pfam" id="PF13500">
    <property type="entry name" value="AAA_26"/>
    <property type="match status" value="1"/>
</dbReference>
<dbReference type="Pfam" id="PF07085">
    <property type="entry name" value="DRTGG"/>
    <property type="match status" value="1"/>
</dbReference>
<dbReference type="Pfam" id="PF01515">
    <property type="entry name" value="PTA_PTB"/>
    <property type="match status" value="1"/>
</dbReference>
<dbReference type="PIRSF" id="PIRSF006107">
    <property type="entry name" value="PhpActrans_proteobac"/>
    <property type="match status" value="1"/>
</dbReference>
<dbReference type="SUPFAM" id="SSF75138">
    <property type="entry name" value="HprK N-terminal domain-like"/>
    <property type="match status" value="1"/>
</dbReference>
<dbReference type="SUPFAM" id="SSF53659">
    <property type="entry name" value="Isocitrate/Isopropylmalate dehydrogenase-like"/>
    <property type="match status" value="1"/>
</dbReference>
<dbReference type="SUPFAM" id="SSF52540">
    <property type="entry name" value="P-loop containing nucleoside triphosphate hydrolases"/>
    <property type="match status" value="1"/>
</dbReference>
<gene>
    <name type="primary">pta</name>
    <name type="ordered locus">SCO5425</name>
    <name type="ORF">SC6A11.01c</name>
    <name type="ORF">SC8F4.29c</name>
</gene>
<sequence length="697" mass="74047">MTRSVYVTGIDRGDGRQVVELGVMELLTRQVDRVGVFRPLVHDGPDRLFELLRARYRLSQDPATVYGMDYQEASLLQAEQGVDELVSALVDRFHLVARDYDVVLVLGTDYADTQFPDELSLNARLANEFGASVLPVVGGRKQTADSVLAETHNAFRAYDGLGCDVLAMVTNRVAREDRDEIAERLAHRLPVPCWVVPDEPALSAPTVSQIAHALGAEIVLGDDSGLARDALDFVFGGAMLPNLLAALTPGCLVITPGDRADLVIGTLAAHSAGTPPIAGVLLTLNEVPGEGILTLAARLAPGTPVLSVTGTSFPTAERLFSLEGKLGAATPRKAETALGLFERYVDTAELNKRVSAPSSDRVTPMMFEHKLLEQARSDLRRVVLPEGTEERVLHAAEVLLRRGVCELTLLGPVEQIRKKAADLGIDLGGAELIDPAASELRDSFAEKYAALRAHKGVTVELAYDVVSDVNYFGTLMVQEGFADGMVSGSVHSTAATIRPAFEIIKTKPDAAIVSSVFFMCLADKVLVYGDCAVNPDPDAEQLADIATQSASTAAQFGVEPRIAMLSYSTGTSGSGADVDKVREATELVRSRRPDLSVEGPIQYDAAVEPSVAATKLPGSAVAGQASVLIFPDLNTGNNTYKAVQRSAGAIAVGPVLQGLRKPVNDLSRGALVQDIVNTVAITAIQAQQSPTEKASAQ</sequence>